<comment type="function">
    <text evidence="1">Molecular chaperone capable of stabilizing a range of proteins. Seems to fulfill an ATP-independent, HSP70-like function in archaeal de novo protein folding.</text>
</comment>
<comment type="subunit">
    <text evidence="1">Heterohexamer of two alpha and four beta subunits.</text>
</comment>
<comment type="subcellular location">
    <subcellularLocation>
        <location evidence="1">Cytoplasm</location>
    </subcellularLocation>
</comment>
<comment type="similarity">
    <text evidence="1">Belongs to the prefoldin subunit beta family.</text>
</comment>
<sequence>MELPANVQNQIMQFQQLQQQLQMIMYQKQQFETQLKEMEKAIEEMEKSGSEEVFKMAGGILIKRNKAEVKEELSERVETLQLRVTTFEKQEEKMQKRYTELQENLQKAMGQGQ</sequence>
<feature type="chain" id="PRO_1000115623" description="Prefoldin subunit beta">
    <location>
        <begin position="1"/>
        <end position="113"/>
    </location>
</feature>
<organism>
    <name type="scientific">Methanococcus maripaludis (strain C6 / ATCC BAA-1332)</name>
    <dbReference type="NCBI Taxonomy" id="444158"/>
    <lineage>
        <taxon>Archaea</taxon>
        <taxon>Methanobacteriati</taxon>
        <taxon>Methanobacteriota</taxon>
        <taxon>Methanomada group</taxon>
        <taxon>Methanococci</taxon>
        <taxon>Methanococcales</taxon>
        <taxon>Methanococcaceae</taxon>
        <taxon>Methanococcus</taxon>
    </lineage>
</organism>
<proteinExistence type="inferred from homology"/>
<reference key="1">
    <citation type="submission" date="2007-10" db="EMBL/GenBank/DDBJ databases">
        <title>Complete sequence of Methanococcus maripaludis C6.</title>
        <authorList>
            <consortium name="US DOE Joint Genome Institute"/>
            <person name="Copeland A."/>
            <person name="Lucas S."/>
            <person name="Lapidus A."/>
            <person name="Barry K."/>
            <person name="Glavina del Rio T."/>
            <person name="Dalin E."/>
            <person name="Tice H."/>
            <person name="Pitluck S."/>
            <person name="Clum A."/>
            <person name="Schmutz J."/>
            <person name="Larimer F."/>
            <person name="Land M."/>
            <person name="Hauser L."/>
            <person name="Kyrpides N."/>
            <person name="Mikhailova N."/>
            <person name="Sieprawska-Lupa M."/>
            <person name="Whitman W.B."/>
            <person name="Richardson P."/>
        </authorList>
    </citation>
    <scope>NUCLEOTIDE SEQUENCE [LARGE SCALE GENOMIC DNA]</scope>
    <source>
        <strain>C6 / ATCC BAA-1332</strain>
    </source>
</reference>
<dbReference type="EMBL" id="CP000867">
    <property type="protein sequence ID" value="ABX01525.1"/>
    <property type="molecule type" value="Genomic_DNA"/>
</dbReference>
<dbReference type="SMR" id="A9A852"/>
<dbReference type="STRING" id="444158.MmarC6_0708"/>
<dbReference type="KEGG" id="mmx:MmarC6_0708"/>
<dbReference type="eggNOG" id="arCOG01342">
    <property type="taxonomic scope" value="Archaea"/>
</dbReference>
<dbReference type="HOGENOM" id="CLU_131909_0_1_2"/>
<dbReference type="OrthoDB" id="60701at2157"/>
<dbReference type="PhylomeDB" id="A9A852"/>
<dbReference type="GO" id="GO:0005737">
    <property type="term" value="C:cytoplasm"/>
    <property type="evidence" value="ECO:0007669"/>
    <property type="project" value="UniProtKB-SubCell"/>
</dbReference>
<dbReference type="GO" id="GO:0016272">
    <property type="term" value="C:prefoldin complex"/>
    <property type="evidence" value="ECO:0007669"/>
    <property type="project" value="UniProtKB-UniRule"/>
</dbReference>
<dbReference type="GO" id="GO:0051082">
    <property type="term" value="F:unfolded protein binding"/>
    <property type="evidence" value="ECO:0007669"/>
    <property type="project" value="UniProtKB-UniRule"/>
</dbReference>
<dbReference type="GO" id="GO:0006457">
    <property type="term" value="P:protein folding"/>
    <property type="evidence" value="ECO:0007669"/>
    <property type="project" value="UniProtKB-UniRule"/>
</dbReference>
<dbReference type="CDD" id="cd23162">
    <property type="entry name" value="Prefoldin_beta_GimC"/>
    <property type="match status" value="1"/>
</dbReference>
<dbReference type="Gene3D" id="1.10.287.370">
    <property type="match status" value="1"/>
</dbReference>
<dbReference type="HAMAP" id="MF_00307">
    <property type="entry name" value="PfdB"/>
    <property type="match status" value="1"/>
</dbReference>
<dbReference type="InterPro" id="IPR002777">
    <property type="entry name" value="PFD_beta-like"/>
</dbReference>
<dbReference type="InterPro" id="IPR012713">
    <property type="entry name" value="PfdB"/>
</dbReference>
<dbReference type="InterPro" id="IPR009053">
    <property type="entry name" value="Prefoldin"/>
</dbReference>
<dbReference type="NCBIfam" id="TIGR02338">
    <property type="entry name" value="gimC_beta"/>
    <property type="match status" value="1"/>
</dbReference>
<dbReference type="Pfam" id="PF01920">
    <property type="entry name" value="Prefoldin_2"/>
    <property type="match status" value="1"/>
</dbReference>
<dbReference type="SUPFAM" id="SSF46579">
    <property type="entry name" value="Prefoldin"/>
    <property type="match status" value="1"/>
</dbReference>
<keyword id="KW-0143">Chaperone</keyword>
<keyword id="KW-0963">Cytoplasm</keyword>
<name>PFDB_METM6</name>
<gene>
    <name evidence="1" type="primary">pfdB</name>
    <name type="ordered locus">MmarC6_0708</name>
</gene>
<protein>
    <recommendedName>
        <fullName evidence="1">Prefoldin subunit beta</fullName>
    </recommendedName>
    <alternativeName>
        <fullName evidence="1">GimC subunit beta</fullName>
    </alternativeName>
</protein>
<accession>A9A852</accession>
<evidence type="ECO:0000255" key="1">
    <source>
        <dbReference type="HAMAP-Rule" id="MF_00307"/>
    </source>
</evidence>